<protein>
    <recommendedName>
        <fullName evidence="1">dITP/XTP pyrophosphatase</fullName>
        <ecNumber evidence="1">3.6.1.66</ecNumber>
    </recommendedName>
    <alternativeName>
        <fullName evidence="1">Non-canonical purine NTP pyrophosphatase</fullName>
    </alternativeName>
    <alternativeName>
        <fullName evidence="1">Non-standard purine NTP pyrophosphatase</fullName>
    </alternativeName>
    <alternativeName>
        <fullName evidence="1">Nucleoside-triphosphate diphosphatase</fullName>
    </alternativeName>
    <alternativeName>
        <fullName evidence="1">Nucleoside-triphosphate pyrophosphatase</fullName>
        <shortName evidence="1">NTPase</shortName>
    </alternativeName>
</protein>
<name>IXTPA_AROAE</name>
<feature type="chain" id="PRO_0000178118" description="dITP/XTP pyrophosphatase">
    <location>
        <begin position="1"/>
        <end position="198"/>
    </location>
</feature>
<feature type="active site" description="Proton acceptor" evidence="1">
    <location>
        <position position="70"/>
    </location>
</feature>
<feature type="binding site" evidence="1">
    <location>
        <begin position="9"/>
        <end position="14"/>
    </location>
    <ligand>
        <name>substrate</name>
    </ligand>
</feature>
<feature type="binding site" evidence="1">
    <location>
        <position position="41"/>
    </location>
    <ligand>
        <name>Mg(2+)</name>
        <dbReference type="ChEBI" id="CHEBI:18420"/>
    </ligand>
</feature>
<feature type="binding site" evidence="1">
    <location>
        <position position="70"/>
    </location>
    <ligand>
        <name>Mg(2+)</name>
        <dbReference type="ChEBI" id="CHEBI:18420"/>
    </ligand>
</feature>
<feature type="binding site" evidence="1">
    <location>
        <position position="71"/>
    </location>
    <ligand>
        <name>substrate</name>
    </ligand>
</feature>
<feature type="binding site" evidence="1">
    <location>
        <begin position="153"/>
        <end position="156"/>
    </location>
    <ligand>
        <name>substrate</name>
    </ligand>
</feature>
<feature type="binding site" evidence="1">
    <location>
        <position position="176"/>
    </location>
    <ligand>
        <name>substrate</name>
    </ligand>
</feature>
<feature type="binding site" evidence="1">
    <location>
        <begin position="181"/>
        <end position="182"/>
    </location>
    <ligand>
        <name>substrate</name>
    </ligand>
</feature>
<dbReference type="EC" id="3.6.1.66" evidence="1"/>
<dbReference type="EMBL" id="CR555306">
    <property type="protein sequence ID" value="CAI07417.1"/>
    <property type="molecule type" value="Genomic_DNA"/>
</dbReference>
<dbReference type="RefSeq" id="WP_011237137.1">
    <property type="nucleotide sequence ID" value="NC_006513.1"/>
</dbReference>
<dbReference type="SMR" id="Q5P5J5"/>
<dbReference type="STRING" id="76114.c1A234"/>
<dbReference type="KEGG" id="eba:c1A234"/>
<dbReference type="eggNOG" id="COG0127">
    <property type="taxonomic scope" value="Bacteria"/>
</dbReference>
<dbReference type="HOGENOM" id="CLU_082080_0_3_4"/>
<dbReference type="OrthoDB" id="9807456at2"/>
<dbReference type="Proteomes" id="UP000006552">
    <property type="component" value="Chromosome"/>
</dbReference>
<dbReference type="GO" id="GO:0005829">
    <property type="term" value="C:cytosol"/>
    <property type="evidence" value="ECO:0007669"/>
    <property type="project" value="TreeGrafter"/>
</dbReference>
<dbReference type="GO" id="GO:0035870">
    <property type="term" value="F:dITP diphosphatase activity"/>
    <property type="evidence" value="ECO:0007669"/>
    <property type="project" value="RHEA"/>
</dbReference>
<dbReference type="GO" id="GO:0036220">
    <property type="term" value="F:ITP diphosphatase activity"/>
    <property type="evidence" value="ECO:0007669"/>
    <property type="project" value="UniProtKB-EC"/>
</dbReference>
<dbReference type="GO" id="GO:0046872">
    <property type="term" value="F:metal ion binding"/>
    <property type="evidence" value="ECO:0007669"/>
    <property type="project" value="UniProtKB-KW"/>
</dbReference>
<dbReference type="GO" id="GO:0000166">
    <property type="term" value="F:nucleotide binding"/>
    <property type="evidence" value="ECO:0007669"/>
    <property type="project" value="UniProtKB-KW"/>
</dbReference>
<dbReference type="GO" id="GO:0017111">
    <property type="term" value="F:ribonucleoside triphosphate phosphatase activity"/>
    <property type="evidence" value="ECO:0007669"/>
    <property type="project" value="InterPro"/>
</dbReference>
<dbReference type="GO" id="GO:0036222">
    <property type="term" value="F:XTP diphosphatase activity"/>
    <property type="evidence" value="ECO:0007669"/>
    <property type="project" value="RHEA"/>
</dbReference>
<dbReference type="GO" id="GO:0009117">
    <property type="term" value="P:nucleotide metabolic process"/>
    <property type="evidence" value="ECO:0007669"/>
    <property type="project" value="UniProtKB-KW"/>
</dbReference>
<dbReference type="GO" id="GO:0009146">
    <property type="term" value="P:purine nucleoside triphosphate catabolic process"/>
    <property type="evidence" value="ECO:0007669"/>
    <property type="project" value="UniProtKB-UniRule"/>
</dbReference>
<dbReference type="CDD" id="cd00515">
    <property type="entry name" value="HAM1"/>
    <property type="match status" value="1"/>
</dbReference>
<dbReference type="FunFam" id="3.90.950.10:FF:000001">
    <property type="entry name" value="dITP/XTP pyrophosphatase"/>
    <property type="match status" value="1"/>
</dbReference>
<dbReference type="Gene3D" id="3.90.950.10">
    <property type="match status" value="1"/>
</dbReference>
<dbReference type="HAMAP" id="MF_01405">
    <property type="entry name" value="Non_canon_purine_NTPase"/>
    <property type="match status" value="1"/>
</dbReference>
<dbReference type="InterPro" id="IPR020922">
    <property type="entry name" value="dITP/XTP_pyrophosphatase"/>
</dbReference>
<dbReference type="InterPro" id="IPR029001">
    <property type="entry name" value="ITPase-like_fam"/>
</dbReference>
<dbReference type="InterPro" id="IPR002637">
    <property type="entry name" value="RdgB/HAM1"/>
</dbReference>
<dbReference type="NCBIfam" id="TIGR00042">
    <property type="entry name" value="RdgB/HAM1 family non-canonical purine NTP pyrophosphatase"/>
    <property type="match status" value="1"/>
</dbReference>
<dbReference type="PANTHER" id="PTHR11067:SF9">
    <property type="entry name" value="INOSINE TRIPHOSPHATE PYROPHOSPHATASE"/>
    <property type="match status" value="1"/>
</dbReference>
<dbReference type="PANTHER" id="PTHR11067">
    <property type="entry name" value="INOSINE TRIPHOSPHATE PYROPHOSPHATASE/HAM1 PROTEIN"/>
    <property type="match status" value="1"/>
</dbReference>
<dbReference type="Pfam" id="PF01725">
    <property type="entry name" value="Ham1p_like"/>
    <property type="match status" value="1"/>
</dbReference>
<dbReference type="SUPFAM" id="SSF52972">
    <property type="entry name" value="ITPase-like"/>
    <property type="match status" value="1"/>
</dbReference>
<gene>
    <name type="ordered locus">AZOSEA12920</name>
    <name type="ORF">c1A234</name>
</gene>
<reference key="1">
    <citation type="journal article" date="2005" name="Arch. Microbiol.">
        <title>The genome sequence of an anaerobic aromatic-degrading denitrifying bacterium, strain EbN1.</title>
        <authorList>
            <person name="Rabus R."/>
            <person name="Kube M."/>
            <person name="Heider J."/>
            <person name="Beck A."/>
            <person name="Heitmann K."/>
            <person name="Widdel F."/>
            <person name="Reinhardt R."/>
        </authorList>
    </citation>
    <scope>NUCLEOTIDE SEQUENCE [LARGE SCALE GENOMIC DNA]</scope>
    <source>
        <strain>DSM 19018 / LMG 30748 / EbN1</strain>
    </source>
</reference>
<organism>
    <name type="scientific">Aromatoleum aromaticum (strain DSM 19018 / LMG 30748 / EbN1)</name>
    <name type="common">Azoarcus sp. (strain EbN1)</name>
    <dbReference type="NCBI Taxonomy" id="76114"/>
    <lineage>
        <taxon>Bacteria</taxon>
        <taxon>Pseudomonadati</taxon>
        <taxon>Pseudomonadota</taxon>
        <taxon>Betaproteobacteria</taxon>
        <taxon>Rhodocyclales</taxon>
        <taxon>Rhodocyclaceae</taxon>
        <taxon>Aromatoleum</taxon>
    </lineage>
</organism>
<proteinExistence type="inferred from homology"/>
<evidence type="ECO:0000255" key="1">
    <source>
        <dbReference type="HAMAP-Rule" id="MF_01405"/>
    </source>
</evidence>
<keyword id="KW-0378">Hydrolase</keyword>
<keyword id="KW-0460">Magnesium</keyword>
<keyword id="KW-0479">Metal-binding</keyword>
<keyword id="KW-0546">Nucleotide metabolism</keyword>
<keyword id="KW-0547">Nucleotide-binding</keyword>
<keyword id="KW-1185">Reference proteome</keyword>
<comment type="function">
    <text evidence="1">Pyrophosphatase that catalyzes the hydrolysis of nucleoside triphosphates to their monophosphate derivatives, with a high preference for the non-canonical purine nucleotides XTP (xanthosine triphosphate), dITP (deoxyinosine triphosphate) and ITP. Seems to function as a house-cleaning enzyme that removes non-canonical purine nucleotides from the nucleotide pool, thus preventing their incorporation into DNA/RNA and avoiding chromosomal lesions.</text>
</comment>
<comment type="catalytic activity">
    <reaction evidence="1">
        <text>XTP + H2O = XMP + diphosphate + H(+)</text>
        <dbReference type="Rhea" id="RHEA:28610"/>
        <dbReference type="ChEBI" id="CHEBI:15377"/>
        <dbReference type="ChEBI" id="CHEBI:15378"/>
        <dbReference type="ChEBI" id="CHEBI:33019"/>
        <dbReference type="ChEBI" id="CHEBI:57464"/>
        <dbReference type="ChEBI" id="CHEBI:61314"/>
        <dbReference type="EC" id="3.6.1.66"/>
    </reaction>
</comment>
<comment type="catalytic activity">
    <reaction evidence="1">
        <text>dITP + H2O = dIMP + diphosphate + H(+)</text>
        <dbReference type="Rhea" id="RHEA:28342"/>
        <dbReference type="ChEBI" id="CHEBI:15377"/>
        <dbReference type="ChEBI" id="CHEBI:15378"/>
        <dbReference type="ChEBI" id="CHEBI:33019"/>
        <dbReference type="ChEBI" id="CHEBI:61194"/>
        <dbReference type="ChEBI" id="CHEBI:61382"/>
        <dbReference type="EC" id="3.6.1.66"/>
    </reaction>
</comment>
<comment type="catalytic activity">
    <reaction evidence="1">
        <text>ITP + H2O = IMP + diphosphate + H(+)</text>
        <dbReference type="Rhea" id="RHEA:29399"/>
        <dbReference type="ChEBI" id="CHEBI:15377"/>
        <dbReference type="ChEBI" id="CHEBI:15378"/>
        <dbReference type="ChEBI" id="CHEBI:33019"/>
        <dbReference type="ChEBI" id="CHEBI:58053"/>
        <dbReference type="ChEBI" id="CHEBI:61402"/>
        <dbReference type="EC" id="3.6.1.66"/>
    </reaction>
</comment>
<comment type="cofactor">
    <cofactor evidence="1">
        <name>Mg(2+)</name>
        <dbReference type="ChEBI" id="CHEBI:18420"/>
    </cofactor>
    <text evidence="1">Binds 1 Mg(2+) ion per subunit.</text>
</comment>
<comment type="subunit">
    <text evidence="1">Homodimer.</text>
</comment>
<comment type="similarity">
    <text evidence="1">Belongs to the HAM1 NTPase family.</text>
</comment>
<sequence>MTARLVLASNNAKKAVEMTTLLAPLGIEVLPQSAFDIPEADEPHPTFVENALAKARHAAALSGLPAVADDSGLCVAALGGAPGVQSARFAGEPKSDARNNALLVERLAGSADRRAFFYSVVALVRHADDPRPLIADGEWHGTILYAPRGANGFGYDPLFFLPELGQTAAELDAQLKNTLSHRGAAMRHLLARLSTAPL</sequence>
<accession>Q5P5J5</accession>